<sequence length="207" mass="23759">MAEVGGVFASLDWDLHGFSSSLGNVPLADSPGFLNERLGQIEGKLQRGSPTDFAHLKGILRRRQLYCRTGFHLEIFPNGTVHGTRHDHSRFGILEFISLAVGLISIRGVDSGLYLGMNERGELYGSKKLTRECVFREQFEENWYNTYASTLYKHSDSERQYYVALNKDGSPREGYRTKRHQKFTHFLPRPVDPSKLPSMSRDLFHYR</sequence>
<evidence type="ECO:0000250" key="1">
    <source>
        <dbReference type="UniProtKB" id="O54769"/>
    </source>
</evidence>
<evidence type="ECO:0000255" key="2"/>
<evidence type="ECO:0000269" key="3">
    <source>
    </source>
</evidence>
<evidence type="ECO:0000269" key="4">
    <source>
    </source>
</evidence>
<evidence type="ECO:0000269" key="5">
    <source>
    </source>
</evidence>
<evidence type="ECO:0000305" key="6"/>
<evidence type="ECO:0007744" key="7">
    <source>
    </source>
</evidence>
<accession>O43320</accession>
<organism>
    <name type="scientific">Homo sapiens</name>
    <name type="common">Human</name>
    <dbReference type="NCBI Taxonomy" id="9606"/>
    <lineage>
        <taxon>Eukaryota</taxon>
        <taxon>Metazoa</taxon>
        <taxon>Chordata</taxon>
        <taxon>Craniata</taxon>
        <taxon>Vertebrata</taxon>
        <taxon>Euteleostomi</taxon>
        <taxon>Mammalia</taxon>
        <taxon>Eutheria</taxon>
        <taxon>Euarchontoglires</taxon>
        <taxon>Primates</taxon>
        <taxon>Haplorrhini</taxon>
        <taxon>Catarrhini</taxon>
        <taxon>Hominidae</taxon>
        <taxon>Homo</taxon>
    </lineage>
</organism>
<feature type="chain" id="PRO_0000147613" description="Fibroblast growth factor 16">
    <location>
        <begin position="1"/>
        <end position="207"/>
    </location>
</feature>
<feature type="modified residue" description="Phosphoserine" evidence="7">
    <location>
        <position position="111"/>
    </location>
</feature>
<feature type="glycosylation site" description="N-linked (GlcNAc...) asparagine" evidence="2">
    <location>
        <position position="78"/>
    </location>
</feature>
<feature type="sequence variant" id="VAR_072396" description="In MF4; dbSNP:rs2062545863." evidence="5">
    <original>R</original>
    <variation>L</variation>
    <location>
        <position position="68"/>
    </location>
</feature>
<comment type="function">
    <text evidence="3">Plays an important role in the regulation of embryonic development, cell proliferation and cell differentiation, and is required for normal cardiomyocyte proliferation and heart development.</text>
</comment>
<comment type="subunit">
    <text evidence="3">Interacts with FGFR1 and FGFR2.</text>
</comment>
<comment type="interaction">
    <interactant intactId="EBI-11479104">
        <id>O43320</id>
    </interactant>
    <interactant intactId="EBI-2559831">
        <id>Q92989</id>
        <label>CLP1</label>
    </interactant>
    <organismsDiffer>false</organismsDiffer>
    <experiments>3</experiments>
</comment>
<comment type="interaction">
    <interactant intactId="EBI-11479104">
        <id>O43320</id>
    </interactant>
    <interactant intactId="EBI-739789">
        <id>Q92997</id>
        <label>DVL3</label>
    </interactant>
    <organismsDiffer>false</organismsDiffer>
    <experiments>3</experiments>
</comment>
<comment type="interaction">
    <interactant intactId="EBI-11479104">
        <id>O43320</id>
    </interactant>
    <interactant intactId="EBI-10961706">
        <id>Q96ED9-2</id>
        <label>HOOK2</label>
    </interactant>
    <organismsDiffer>false</organismsDiffer>
    <experiments>3</experiments>
</comment>
<comment type="interaction">
    <interactant intactId="EBI-11479104">
        <id>O43320</id>
    </interactant>
    <interactant intactId="EBI-6509505">
        <id>Q0VD86</id>
        <label>INCA1</label>
    </interactant>
    <organismsDiffer>false</organismsDiffer>
    <experiments>3</experiments>
</comment>
<comment type="interaction">
    <interactant intactId="EBI-11479104">
        <id>O43320</id>
    </interactant>
    <interactant intactId="EBI-948001">
        <id>Q15323</id>
        <label>KRT31</label>
    </interactant>
    <organismsDiffer>false</organismsDiffer>
    <experiments>3</experiments>
</comment>
<comment type="interaction">
    <interactant intactId="EBI-11479104">
        <id>O43320</id>
    </interactant>
    <interactant intactId="EBI-307531">
        <id>P23508</id>
        <label>MCC</label>
    </interactant>
    <organismsDiffer>false</organismsDiffer>
    <experiments>3</experiments>
</comment>
<comment type="interaction">
    <interactant intactId="EBI-11479104">
        <id>O43320</id>
    </interactant>
    <interactant intactId="EBI-79165">
        <id>Q9NRD5</id>
        <label>PICK1</label>
    </interactant>
    <organismsDiffer>false</organismsDiffer>
    <experiments>3</experiments>
</comment>
<comment type="subcellular location">
    <subcellularLocation>
        <location evidence="1">Secreted</location>
    </subcellularLocation>
</comment>
<comment type="disease" evidence="4 5">
    <disease id="DI-03931">
        <name>Metacarpal 4-5 fusion</name>
        <acronym>MF4</acronym>
        <description>A rare congenital malformation of the hand characterized by the partial or complete fusion of the fourth and fifth metacarpals. The anomaly occurs as an isolated trait or part of a syndrome.</description>
        <dbReference type="MIM" id="309630"/>
    </disease>
    <text>The disease is caused by variants affecting the gene represented in this entry.</text>
</comment>
<comment type="similarity">
    <text evidence="6">Belongs to the heparin-binding growth factors family.</text>
</comment>
<protein>
    <recommendedName>
        <fullName>Fibroblast growth factor 16</fullName>
        <shortName>FGF-16</shortName>
    </recommendedName>
</protein>
<dbReference type="EMBL" id="AB009391">
    <property type="protein sequence ID" value="BAA24956.1"/>
    <property type="molecule type" value="mRNA"/>
</dbReference>
<dbReference type="EMBL" id="BX682239">
    <property type="status" value="NOT_ANNOTATED_CDS"/>
    <property type="molecule type" value="Genomic_DNA"/>
</dbReference>
<dbReference type="CCDS" id="CCDS75996.1"/>
<dbReference type="PIR" id="JC5941">
    <property type="entry name" value="JC5941"/>
</dbReference>
<dbReference type="RefSeq" id="NP_003859.1">
    <property type="nucleotide sequence ID" value="NM_003868.3"/>
</dbReference>
<dbReference type="SMR" id="O43320"/>
<dbReference type="BioGRID" id="114350">
    <property type="interactions" value="14"/>
</dbReference>
<dbReference type="FunCoup" id="O43320">
    <property type="interactions" value="913"/>
</dbReference>
<dbReference type="IntAct" id="O43320">
    <property type="interactions" value="9"/>
</dbReference>
<dbReference type="STRING" id="9606.ENSP00000399324"/>
<dbReference type="GlyCosmos" id="O43320">
    <property type="glycosylation" value="1 site, No reported glycans"/>
</dbReference>
<dbReference type="GlyGen" id="O43320">
    <property type="glycosylation" value="2 sites, 1 O-linked glycan (1 site)"/>
</dbReference>
<dbReference type="iPTMnet" id="O43320"/>
<dbReference type="PhosphoSitePlus" id="O43320"/>
<dbReference type="BioMuta" id="FGF16"/>
<dbReference type="jPOST" id="O43320"/>
<dbReference type="MassIVE" id="O43320"/>
<dbReference type="PaxDb" id="9606-ENSP00000399324"/>
<dbReference type="PeptideAtlas" id="O43320"/>
<dbReference type="Antibodypedia" id="72310">
    <property type="antibodies" value="252 antibodies from 27 providers"/>
</dbReference>
<dbReference type="DNASU" id="8823"/>
<dbReference type="Ensembl" id="ENST00000439435.3">
    <property type="protein sequence ID" value="ENSP00000399324.2"/>
    <property type="gene ID" value="ENSG00000196468.8"/>
</dbReference>
<dbReference type="GeneID" id="8823"/>
<dbReference type="KEGG" id="hsa:8823"/>
<dbReference type="MANE-Select" id="ENST00000439435.3">
    <property type="protein sequence ID" value="ENSP00000399324.2"/>
    <property type="RefSeq nucleotide sequence ID" value="NM_003868.3"/>
    <property type="RefSeq protein sequence ID" value="NP_003859.1"/>
</dbReference>
<dbReference type="UCSC" id="uc033ejs.2">
    <property type="organism name" value="human"/>
</dbReference>
<dbReference type="AGR" id="HGNC:3672"/>
<dbReference type="CTD" id="8823"/>
<dbReference type="DisGeNET" id="8823"/>
<dbReference type="GeneCards" id="FGF16"/>
<dbReference type="HGNC" id="HGNC:3672">
    <property type="gene designation" value="FGF16"/>
</dbReference>
<dbReference type="HPA" id="ENSG00000196468">
    <property type="expression patterns" value="Tissue enriched (choroid)"/>
</dbReference>
<dbReference type="MalaCards" id="FGF16"/>
<dbReference type="MIM" id="300827">
    <property type="type" value="gene"/>
</dbReference>
<dbReference type="MIM" id="309630">
    <property type="type" value="phenotype"/>
</dbReference>
<dbReference type="neXtProt" id="NX_O43320"/>
<dbReference type="OpenTargets" id="ENSG00000196468"/>
<dbReference type="Orphanet" id="2498">
    <property type="disease" value="Syndactyly type 8"/>
</dbReference>
<dbReference type="PharmGKB" id="PA28111"/>
<dbReference type="VEuPathDB" id="HostDB:ENSG00000196468"/>
<dbReference type="eggNOG" id="KOG3885">
    <property type="taxonomic scope" value="Eukaryota"/>
</dbReference>
<dbReference type="GeneTree" id="ENSGT00940000160087"/>
<dbReference type="HOGENOM" id="CLU_081609_0_0_1"/>
<dbReference type="InParanoid" id="O43320"/>
<dbReference type="OMA" id="MDSERHY"/>
<dbReference type="OrthoDB" id="6158176at2759"/>
<dbReference type="PAN-GO" id="O43320">
    <property type="GO annotations" value="11 GO annotations based on evolutionary models"/>
</dbReference>
<dbReference type="PhylomeDB" id="O43320"/>
<dbReference type="PathwayCommons" id="O43320"/>
<dbReference type="Reactome" id="R-HSA-109704">
    <property type="pathway name" value="PI3K Cascade"/>
</dbReference>
<dbReference type="Reactome" id="R-HSA-1257604">
    <property type="pathway name" value="PIP3 activates AKT signaling"/>
</dbReference>
<dbReference type="Reactome" id="R-HSA-1839130">
    <property type="pathway name" value="Signaling by activated point mutants of FGFR3"/>
</dbReference>
<dbReference type="Reactome" id="R-HSA-190322">
    <property type="pathway name" value="FGFR4 ligand binding and activation"/>
</dbReference>
<dbReference type="Reactome" id="R-HSA-190372">
    <property type="pathway name" value="FGFR3c ligand binding and activation"/>
</dbReference>
<dbReference type="Reactome" id="R-HSA-190375">
    <property type="pathway name" value="FGFR2c ligand binding and activation"/>
</dbReference>
<dbReference type="Reactome" id="R-HSA-2033519">
    <property type="pathway name" value="Activated point mutants of FGFR2"/>
</dbReference>
<dbReference type="Reactome" id="R-HSA-2219530">
    <property type="pathway name" value="Constitutive Signaling by Aberrant PI3K in Cancer"/>
</dbReference>
<dbReference type="Reactome" id="R-HSA-5654221">
    <property type="pathway name" value="Phospholipase C-mediated cascade, FGFR2"/>
</dbReference>
<dbReference type="Reactome" id="R-HSA-5654227">
    <property type="pathway name" value="Phospholipase C-mediated cascade, FGFR3"/>
</dbReference>
<dbReference type="Reactome" id="R-HSA-5654228">
    <property type="pathway name" value="Phospholipase C-mediated cascade, FGFR4"/>
</dbReference>
<dbReference type="Reactome" id="R-HSA-5654695">
    <property type="pathway name" value="PI-3K cascade:FGFR2"/>
</dbReference>
<dbReference type="Reactome" id="R-HSA-5654699">
    <property type="pathway name" value="SHC-mediated cascade:FGFR2"/>
</dbReference>
<dbReference type="Reactome" id="R-HSA-5654700">
    <property type="pathway name" value="FRS-mediated FGFR2 signaling"/>
</dbReference>
<dbReference type="Reactome" id="R-HSA-5654704">
    <property type="pathway name" value="SHC-mediated cascade:FGFR3"/>
</dbReference>
<dbReference type="Reactome" id="R-HSA-5654706">
    <property type="pathway name" value="FRS-mediated FGFR3 signaling"/>
</dbReference>
<dbReference type="Reactome" id="R-HSA-5654710">
    <property type="pathway name" value="PI-3K cascade:FGFR3"/>
</dbReference>
<dbReference type="Reactome" id="R-HSA-5654712">
    <property type="pathway name" value="FRS-mediated FGFR4 signaling"/>
</dbReference>
<dbReference type="Reactome" id="R-HSA-5654719">
    <property type="pathway name" value="SHC-mediated cascade:FGFR4"/>
</dbReference>
<dbReference type="Reactome" id="R-HSA-5654720">
    <property type="pathway name" value="PI-3K cascade:FGFR4"/>
</dbReference>
<dbReference type="Reactome" id="R-HSA-5654727">
    <property type="pathway name" value="Negative regulation of FGFR2 signaling"/>
</dbReference>
<dbReference type="Reactome" id="R-HSA-5654732">
    <property type="pathway name" value="Negative regulation of FGFR3 signaling"/>
</dbReference>
<dbReference type="Reactome" id="R-HSA-5654733">
    <property type="pathway name" value="Negative regulation of FGFR4 signaling"/>
</dbReference>
<dbReference type="Reactome" id="R-HSA-5655253">
    <property type="pathway name" value="Signaling by FGFR2 in disease"/>
</dbReference>
<dbReference type="Reactome" id="R-HSA-5655332">
    <property type="pathway name" value="Signaling by FGFR3 in disease"/>
</dbReference>
<dbReference type="Reactome" id="R-HSA-5673001">
    <property type="pathway name" value="RAF/MAP kinase cascade"/>
</dbReference>
<dbReference type="Reactome" id="R-HSA-6811558">
    <property type="pathway name" value="PI5P, PP2A and IER3 Regulate PI3K/AKT Signaling"/>
</dbReference>
<dbReference type="SignaLink" id="O43320"/>
<dbReference type="BioGRID-ORCS" id="8823">
    <property type="hits" value="12 hits in 275 CRISPR screens"/>
</dbReference>
<dbReference type="GenomeRNAi" id="8823"/>
<dbReference type="Pharos" id="O43320">
    <property type="development level" value="Tbio"/>
</dbReference>
<dbReference type="PRO" id="PR:O43320"/>
<dbReference type="Proteomes" id="UP000005640">
    <property type="component" value="Chromosome X"/>
</dbReference>
<dbReference type="RNAct" id="O43320">
    <property type="molecule type" value="protein"/>
</dbReference>
<dbReference type="Bgee" id="ENSG00000196468">
    <property type="expression patterns" value="Expressed in primordial germ cell in gonad and 45 other cell types or tissues"/>
</dbReference>
<dbReference type="GO" id="GO:0005737">
    <property type="term" value="C:cytoplasm"/>
    <property type="evidence" value="ECO:0000318"/>
    <property type="project" value="GO_Central"/>
</dbReference>
<dbReference type="GO" id="GO:0005576">
    <property type="term" value="C:extracellular region"/>
    <property type="evidence" value="ECO:0000304"/>
    <property type="project" value="Reactome"/>
</dbReference>
<dbReference type="GO" id="GO:0005615">
    <property type="term" value="C:extracellular space"/>
    <property type="evidence" value="ECO:0000318"/>
    <property type="project" value="GO_Central"/>
</dbReference>
<dbReference type="GO" id="GO:0005104">
    <property type="term" value="F:fibroblast growth factor receptor binding"/>
    <property type="evidence" value="ECO:0000318"/>
    <property type="project" value="GO_Central"/>
</dbReference>
<dbReference type="GO" id="GO:0008083">
    <property type="term" value="F:growth factor activity"/>
    <property type="evidence" value="ECO:0000318"/>
    <property type="project" value="GO_Central"/>
</dbReference>
<dbReference type="GO" id="GO:0009887">
    <property type="term" value="P:animal organ morphogenesis"/>
    <property type="evidence" value="ECO:0000304"/>
    <property type="project" value="ProtInc"/>
</dbReference>
<dbReference type="GO" id="GO:0007267">
    <property type="term" value="P:cell-cell signaling"/>
    <property type="evidence" value="ECO:0000304"/>
    <property type="project" value="ProtInc"/>
</dbReference>
<dbReference type="GO" id="GO:0008543">
    <property type="term" value="P:fibroblast growth factor receptor signaling pathway"/>
    <property type="evidence" value="ECO:0000318"/>
    <property type="project" value="GO_Central"/>
</dbReference>
<dbReference type="GO" id="GO:0022008">
    <property type="term" value="P:neurogenesis"/>
    <property type="evidence" value="ECO:0000318"/>
    <property type="project" value="GO_Central"/>
</dbReference>
<dbReference type="GO" id="GO:0008284">
    <property type="term" value="P:positive regulation of cell population proliferation"/>
    <property type="evidence" value="ECO:0000318"/>
    <property type="project" value="GO_Central"/>
</dbReference>
<dbReference type="GO" id="GO:2000546">
    <property type="term" value="P:positive regulation of endothelial cell chemotaxis to fibroblast growth factor"/>
    <property type="evidence" value="ECO:0000314"/>
    <property type="project" value="UniProtKB"/>
</dbReference>
<dbReference type="GO" id="GO:0043410">
    <property type="term" value="P:positive regulation of MAPK cascade"/>
    <property type="evidence" value="ECO:0000318"/>
    <property type="project" value="GO_Central"/>
</dbReference>
<dbReference type="GO" id="GO:0030334">
    <property type="term" value="P:regulation of cell migration"/>
    <property type="evidence" value="ECO:0000318"/>
    <property type="project" value="GO_Central"/>
</dbReference>
<dbReference type="GO" id="GO:0009266">
    <property type="term" value="P:response to temperature stimulus"/>
    <property type="evidence" value="ECO:0000304"/>
    <property type="project" value="ProtInc"/>
</dbReference>
<dbReference type="GO" id="GO:0007165">
    <property type="term" value="P:signal transduction"/>
    <property type="evidence" value="ECO:0000304"/>
    <property type="project" value="ProtInc"/>
</dbReference>
<dbReference type="CDD" id="cd23326">
    <property type="entry name" value="beta-trefoil_FGF16"/>
    <property type="match status" value="1"/>
</dbReference>
<dbReference type="FunFam" id="2.80.10.50:FF:000004">
    <property type="entry name" value="Fibroblast growth factor"/>
    <property type="match status" value="1"/>
</dbReference>
<dbReference type="Gene3D" id="2.80.10.50">
    <property type="match status" value="1"/>
</dbReference>
<dbReference type="InterPro" id="IPR002209">
    <property type="entry name" value="Fibroblast_GF_fam"/>
</dbReference>
<dbReference type="InterPro" id="IPR008996">
    <property type="entry name" value="IL1/FGF"/>
</dbReference>
<dbReference type="PANTHER" id="PTHR11486">
    <property type="entry name" value="FIBROBLAST GROWTH FACTOR"/>
    <property type="match status" value="1"/>
</dbReference>
<dbReference type="Pfam" id="PF00167">
    <property type="entry name" value="FGF"/>
    <property type="match status" value="1"/>
</dbReference>
<dbReference type="PRINTS" id="PR00263">
    <property type="entry name" value="HBGFFGF"/>
</dbReference>
<dbReference type="PRINTS" id="PR00262">
    <property type="entry name" value="IL1HBGF"/>
</dbReference>
<dbReference type="SMART" id="SM00442">
    <property type="entry name" value="FGF"/>
    <property type="match status" value="1"/>
</dbReference>
<dbReference type="SUPFAM" id="SSF50353">
    <property type="entry name" value="Cytokine"/>
    <property type="match status" value="1"/>
</dbReference>
<dbReference type="PROSITE" id="PS00247">
    <property type="entry name" value="HBGF_FGF"/>
    <property type="match status" value="1"/>
</dbReference>
<proteinExistence type="evidence at protein level"/>
<reference key="1">
    <citation type="journal article" date="1998" name="Biochem. Biophys. Res. Commun.">
        <title>Structure and expression of a novel member, FGF-16, on the fibroblast growth factor family.</title>
        <authorList>
            <person name="Miyake A."/>
            <person name="Konishi M."/>
            <person name="Martin F.H."/>
            <person name="Hernday N.A."/>
            <person name="Ozaki K."/>
            <person name="Yamamoto S."/>
            <person name="Mikami T."/>
            <person name="Arakawa T."/>
            <person name="Itoh N."/>
        </authorList>
    </citation>
    <scope>NUCLEOTIDE SEQUENCE [MRNA]</scope>
    <source>
        <tissue>Heart</tissue>
    </source>
</reference>
<reference key="2">
    <citation type="journal article" date="2005" name="Nature">
        <title>The DNA sequence of the human X chromosome.</title>
        <authorList>
            <person name="Ross M.T."/>
            <person name="Grafham D.V."/>
            <person name="Coffey A.J."/>
            <person name="Scherer S."/>
            <person name="McLay K."/>
            <person name="Muzny D."/>
            <person name="Platzer M."/>
            <person name="Howell G.R."/>
            <person name="Burrows C."/>
            <person name="Bird C.P."/>
            <person name="Frankish A."/>
            <person name="Lovell F.L."/>
            <person name="Howe K.L."/>
            <person name="Ashurst J.L."/>
            <person name="Fulton R.S."/>
            <person name="Sudbrak R."/>
            <person name="Wen G."/>
            <person name="Jones M.C."/>
            <person name="Hurles M.E."/>
            <person name="Andrews T.D."/>
            <person name="Scott C.E."/>
            <person name="Searle S."/>
            <person name="Ramser J."/>
            <person name="Whittaker A."/>
            <person name="Deadman R."/>
            <person name="Carter N.P."/>
            <person name="Hunt S.E."/>
            <person name="Chen R."/>
            <person name="Cree A."/>
            <person name="Gunaratne P."/>
            <person name="Havlak P."/>
            <person name="Hodgson A."/>
            <person name="Metzker M.L."/>
            <person name="Richards S."/>
            <person name="Scott G."/>
            <person name="Steffen D."/>
            <person name="Sodergren E."/>
            <person name="Wheeler D.A."/>
            <person name="Worley K.C."/>
            <person name="Ainscough R."/>
            <person name="Ambrose K.D."/>
            <person name="Ansari-Lari M.A."/>
            <person name="Aradhya S."/>
            <person name="Ashwell R.I."/>
            <person name="Babbage A.K."/>
            <person name="Bagguley C.L."/>
            <person name="Ballabio A."/>
            <person name="Banerjee R."/>
            <person name="Barker G.E."/>
            <person name="Barlow K.F."/>
            <person name="Barrett I.P."/>
            <person name="Bates K.N."/>
            <person name="Beare D.M."/>
            <person name="Beasley H."/>
            <person name="Beasley O."/>
            <person name="Beck A."/>
            <person name="Bethel G."/>
            <person name="Blechschmidt K."/>
            <person name="Brady N."/>
            <person name="Bray-Allen S."/>
            <person name="Bridgeman A.M."/>
            <person name="Brown A.J."/>
            <person name="Brown M.J."/>
            <person name="Bonnin D."/>
            <person name="Bruford E.A."/>
            <person name="Buhay C."/>
            <person name="Burch P."/>
            <person name="Burford D."/>
            <person name="Burgess J."/>
            <person name="Burrill W."/>
            <person name="Burton J."/>
            <person name="Bye J.M."/>
            <person name="Carder C."/>
            <person name="Carrel L."/>
            <person name="Chako J."/>
            <person name="Chapman J.C."/>
            <person name="Chavez D."/>
            <person name="Chen E."/>
            <person name="Chen G."/>
            <person name="Chen Y."/>
            <person name="Chen Z."/>
            <person name="Chinault C."/>
            <person name="Ciccodicola A."/>
            <person name="Clark S.Y."/>
            <person name="Clarke G."/>
            <person name="Clee C.M."/>
            <person name="Clegg S."/>
            <person name="Clerc-Blankenburg K."/>
            <person name="Clifford K."/>
            <person name="Cobley V."/>
            <person name="Cole C.G."/>
            <person name="Conquer J.S."/>
            <person name="Corby N."/>
            <person name="Connor R.E."/>
            <person name="David R."/>
            <person name="Davies J."/>
            <person name="Davis C."/>
            <person name="Davis J."/>
            <person name="Delgado O."/>
            <person name="Deshazo D."/>
            <person name="Dhami P."/>
            <person name="Ding Y."/>
            <person name="Dinh H."/>
            <person name="Dodsworth S."/>
            <person name="Draper H."/>
            <person name="Dugan-Rocha S."/>
            <person name="Dunham A."/>
            <person name="Dunn M."/>
            <person name="Durbin K.J."/>
            <person name="Dutta I."/>
            <person name="Eades T."/>
            <person name="Ellwood M."/>
            <person name="Emery-Cohen A."/>
            <person name="Errington H."/>
            <person name="Evans K.L."/>
            <person name="Faulkner L."/>
            <person name="Francis F."/>
            <person name="Frankland J."/>
            <person name="Fraser A.E."/>
            <person name="Galgoczy P."/>
            <person name="Gilbert J."/>
            <person name="Gill R."/>
            <person name="Gloeckner G."/>
            <person name="Gregory S.G."/>
            <person name="Gribble S."/>
            <person name="Griffiths C."/>
            <person name="Grocock R."/>
            <person name="Gu Y."/>
            <person name="Gwilliam R."/>
            <person name="Hamilton C."/>
            <person name="Hart E.A."/>
            <person name="Hawes A."/>
            <person name="Heath P.D."/>
            <person name="Heitmann K."/>
            <person name="Hennig S."/>
            <person name="Hernandez J."/>
            <person name="Hinzmann B."/>
            <person name="Ho S."/>
            <person name="Hoffs M."/>
            <person name="Howden P.J."/>
            <person name="Huckle E.J."/>
            <person name="Hume J."/>
            <person name="Hunt P.J."/>
            <person name="Hunt A.R."/>
            <person name="Isherwood J."/>
            <person name="Jacob L."/>
            <person name="Johnson D."/>
            <person name="Jones S."/>
            <person name="de Jong P.J."/>
            <person name="Joseph S.S."/>
            <person name="Keenan S."/>
            <person name="Kelly S."/>
            <person name="Kershaw J.K."/>
            <person name="Khan Z."/>
            <person name="Kioschis P."/>
            <person name="Klages S."/>
            <person name="Knights A.J."/>
            <person name="Kosiura A."/>
            <person name="Kovar-Smith C."/>
            <person name="Laird G.K."/>
            <person name="Langford C."/>
            <person name="Lawlor S."/>
            <person name="Leversha M."/>
            <person name="Lewis L."/>
            <person name="Liu W."/>
            <person name="Lloyd C."/>
            <person name="Lloyd D.M."/>
            <person name="Loulseged H."/>
            <person name="Loveland J.E."/>
            <person name="Lovell J.D."/>
            <person name="Lozado R."/>
            <person name="Lu J."/>
            <person name="Lyne R."/>
            <person name="Ma J."/>
            <person name="Maheshwari M."/>
            <person name="Matthews L.H."/>
            <person name="McDowall J."/>
            <person name="McLaren S."/>
            <person name="McMurray A."/>
            <person name="Meidl P."/>
            <person name="Meitinger T."/>
            <person name="Milne S."/>
            <person name="Miner G."/>
            <person name="Mistry S.L."/>
            <person name="Morgan M."/>
            <person name="Morris S."/>
            <person name="Mueller I."/>
            <person name="Mullikin J.C."/>
            <person name="Nguyen N."/>
            <person name="Nordsiek G."/>
            <person name="Nyakatura G."/>
            <person name="O'dell C.N."/>
            <person name="Okwuonu G."/>
            <person name="Palmer S."/>
            <person name="Pandian R."/>
            <person name="Parker D."/>
            <person name="Parrish J."/>
            <person name="Pasternak S."/>
            <person name="Patel D."/>
            <person name="Pearce A.V."/>
            <person name="Pearson D.M."/>
            <person name="Pelan S.E."/>
            <person name="Perez L."/>
            <person name="Porter K.M."/>
            <person name="Ramsey Y."/>
            <person name="Reichwald K."/>
            <person name="Rhodes S."/>
            <person name="Ridler K.A."/>
            <person name="Schlessinger D."/>
            <person name="Schueler M.G."/>
            <person name="Sehra H.K."/>
            <person name="Shaw-Smith C."/>
            <person name="Shen H."/>
            <person name="Sheridan E.M."/>
            <person name="Shownkeen R."/>
            <person name="Skuce C.D."/>
            <person name="Smith M.L."/>
            <person name="Sotheran E.C."/>
            <person name="Steingruber H.E."/>
            <person name="Steward C.A."/>
            <person name="Storey R."/>
            <person name="Swann R.M."/>
            <person name="Swarbreck D."/>
            <person name="Tabor P.E."/>
            <person name="Taudien S."/>
            <person name="Taylor T."/>
            <person name="Teague B."/>
            <person name="Thomas K."/>
            <person name="Thorpe A."/>
            <person name="Timms K."/>
            <person name="Tracey A."/>
            <person name="Trevanion S."/>
            <person name="Tromans A.C."/>
            <person name="d'Urso M."/>
            <person name="Verduzco D."/>
            <person name="Villasana D."/>
            <person name="Waldron L."/>
            <person name="Wall M."/>
            <person name="Wang Q."/>
            <person name="Warren J."/>
            <person name="Warry G.L."/>
            <person name="Wei X."/>
            <person name="West A."/>
            <person name="Whitehead S.L."/>
            <person name="Whiteley M.N."/>
            <person name="Wilkinson J.E."/>
            <person name="Willey D.L."/>
            <person name="Williams G."/>
            <person name="Williams L."/>
            <person name="Williamson A."/>
            <person name="Williamson H."/>
            <person name="Wilming L."/>
            <person name="Woodmansey R.L."/>
            <person name="Wray P.W."/>
            <person name="Yen J."/>
            <person name="Zhang J."/>
            <person name="Zhou J."/>
            <person name="Zoghbi H."/>
            <person name="Zorilla S."/>
            <person name="Buck D."/>
            <person name="Reinhardt R."/>
            <person name="Poustka A."/>
            <person name="Rosenthal A."/>
            <person name="Lehrach H."/>
            <person name="Meindl A."/>
            <person name="Minx P.J."/>
            <person name="Hillier L.W."/>
            <person name="Willard H.F."/>
            <person name="Wilson R.K."/>
            <person name="Waterston R.H."/>
            <person name="Rice C.M."/>
            <person name="Vaudin M."/>
            <person name="Coulson A."/>
            <person name="Nelson D.L."/>
            <person name="Weinstock G."/>
            <person name="Sulston J.E."/>
            <person name="Durbin R.M."/>
            <person name="Hubbard T."/>
            <person name="Gibbs R.A."/>
            <person name="Beck S."/>
            <person name="Rogers J."/>
            <person name="Bentley D.R."/>
        </authorList>
    </citation>
    <scope>NUCLEOTIDE SEQUENCE [LARGE SCALE GENOMIC DNA]</scope>
</reference>
<reference key="3">
    <citation type="journal article" date="2006" name="J. Biol. Chem.">
        <title>Receptor specificity of the fibroblast growth factor family. The complete mammalian FGF family.</title>
        <authorList>
            <person name="Zhang X."/>
            <person name="Ibrahimi O.A."/>
            <person name="Olsen S.K."/>
            <person name="Umemori H."/>
            <person name="Mohammadi M."/>
            <person name="Ornitz D.M."/>
        </authorList>
    </citation>
    <scope>INTERACTION WITH FGFR2 AND FGFR3</scope>
    <scope>FUNCTION IN STIMULATION OF CELL PROLIFERATION</scope>
</reference>
<reference key="4">
    <citation type="journal article" date="2009" name="Sci. Signal.">
        <title>Quantitative phosphoproteomic analysis of T cell receptor signaling reveals system-wide modulation of protein-protein interactions.</title>
        <authorList>
            <person name="Mayya V."/>
            <person name="Lundgren D.H."/>
            <person name="Hwang S.-I."/>
            <person name="Rezaul K."/>
            <person name="Wu L."/>
            <person name="Eng J.K."/>
            <person name="Rodionov V."/>
            <person name="Han D.K."/>
        </authorList>
    </citation>
    <scope>PHOSPHORYLATION [LARGE SCALE ANALYSIS] AT SER-111</scope>
    <scope>IDENTIFICATION BY MASS SPECTROMETRY [LARGE SCALE ANALYSIS]</scope>
    <source>
        <tissue>Leukemic T-cell</tissue>
    </source>
</reference>
<reference key="5">
    <citation type="journal article" date="2010" name="Nat. Rev. Cancer">
        <title>Fibroblast growth factor signalling: from development to cancer.</title>
        <authorList>
            <person name="Turner N."/>
            <person name="Grose R."/>
        </authorList>
    </citation>
    <scope>REVIEW</scope>
</reference>
<reference key="6">
    <citation type="journal article" date="2013" name="J. Med. Genet.">
        <title>Whole exome sequencing identifies FGF16 nonsense mutations as the cause of X-linked recessive metacarpal 4/5 fusion.</title>
        <authorList>
            <person name="Jamsheer A."/>
            <person name="Zemojtel T."/>
            <person name="Kolanczyk M."/>
            <person name="Stricker S."/>
            <person name="Hecht J."/>
            <person name="Krawitz P."/>
            <person name="Doelken S.C."/>
            <person name="Glazar R."/>
            <person name="Socha M."/>
            <person name="Mundlos S."/>
        </authorList>
    </citation>
    <scope>INVOLVEMENT IN MF4</scope>
</reference>
<reference key="7">
    <citation type="journal article" date="2014" name="Mol. Genet. Genomic Med.">
        <title>Identification of three novel FGF16 mutations in X-linked recessive fusion of the fourth and fifth metacarpals and possible correlation with heart disease.</title>
        <authorList>
            <person name="Laurell T."/>
            <person name="Nilsson D."/>
            <person name="Hofmeister W."/>
            <person name="Lindstrand A."/>
            <person name="Ahituv N."/>
            <person name="Vandermeer J."/>
            <person name="Amilon A."/>
            <person name="Anneren G."/>
            <person name="Arner M."/>
            <person name="Pettersson M."/>
            <person name="Jaentti N."/>
            <person name="Rosberg H.E."/>
            <person name="Cattini P.A."/>
            <person name="Nordenskjoeld A."/>
            <person name="Maekitie O."/>
            <person name="Grigelioniene G."/>
            <person name="Nordgren A."/>
        </authorList>
    </citation>
    <scope>INVOLVEMENT IN MF4</scope>
    <scope>VARIANT MF4 LEU-68</scope>
</reference>
<name>FGF16_HUMAN</name>
<keyword id="KW-0225">Disease variant</keyword>
<keyword id="KW-0325">Glycoprotein</keyword>
<keyword id="KW-0339">Growth factor</keyword>
<keyword id="KW-0597">Phosphoprotein</keyword>
<keyword id="KW-1185">Reference proteome</keyword>
<keyword id="KW-0964">Secreted</keyword>
<gene>
    <name type="primary">FGF16</name>
</gene>